<evidence type="ECO:0000250" key="1"/>
<evidence type="ECO:0000255" key="2"/>
<evidence type="ECO:0000255" key="3">
    <source>
        <dbReference type="PROSITE-ProRule" id="PRU00274"/>
    </source>
</evidence>
<evidence type="ECO:0000269" key="4">
    <source>
    </source>
</evidence>
<evidence type="ECO:0000269" key="5">
    <source>
    </source>
</evidence>
<evidence type="ECO:0000269" key="6">
    <source>
    </source>
</evidence>
<evidence type="ECO:0000305" key="7"/>
<evidence type="ECO:0000305" key="8">
    <source>
    </source>
</evidence>
<protein>
    <recommendedName>
        <fullName>Thrombin-like enzyme gloshedobin</fullName>
        <shortName>SVTLE</shortName>
        <ecNumber>3.4.21.-</ecNumber>
    </recommendedName>
    <alternativeName>
        <fullName>Defibrase</fullName>
    </alternativeName>
    <alternativeName>
        <fullName>Fibrinogen-clotting enzyme</fullName>
    </alternativeName>
    <alternativeName>
        <fullName>Snake venom serine protease</fullName>
        <shortName>SVSP</shortName>
    </alternativeName>
</protein>
<comment type="function">
    <text evidence="4 5">Thrombin-like snake venom serine protease. The recombinant form clots fibrinogen by cleaving fibrinogen Aalpha chain (FGA), and slowly Bbeta chain (FGB). Has amidolytic activities.</text>
</comment>
<comment type="activity regulation">
    <text evidence="4 5 6">Completely inhibited by PMSF, and N-tosyl-Lphenylalanine chloromethyl ketone (TPCK) and poorly inhibited by benzamidine and derivates. Not inhibited by EDTA, heparin and hirudin.</text>
</comment>
<comment type="biophysicochemical properties">
    <phDependence>
        <text evidence="4 5">Optimum pH is 7.5-8.0.</text>
    </phDependence>
    <temperatureDependence>
        <text evidence="4 5">Optimum temperature is 40-50 degrees Celsius.</text>
    </temperatureDependence>
</comment>
<comment type="subunit">
    <text evidence="1">Monomer.</text>
</comment>
<comment type="subcellular location">
    <subcellularLocation>
        <location>Secreted</location>
    </subcellularLocation>
</comment>
<comment type="tissue specificity">
    <text>Expressed by the venom gland.</text>
</comment>
<comment type="miscellaneous">
    <text evidence="8">Negative results: has no activity on gamma chain.</text>
</comment>
<comment type="similarity">
    <text evidence="3">Belongs to the peptidase S1 family. Snake venom subfamily.</text>
</comment>
<organism>
    <name type="scientific">Gloydius shedaoensis</name>
    <name type="common">Shedao island pit viper</name>
    <name type="synonym">Agkistrodon shedaoensis</name>
    <dbReference type="NCBI Taxonomy" id="88083"/>
    <lineage>
        <taxon>Eukaryota</taxon>
        <taxon>Metazoa</taxon>
        <taxon>Chordata</taxon>
        <taxon>Craniata</taxon>
        <taxon>Vertebrata</taxon>
        <taxon>Euteleostomi</taxon>
        <taxon>Lepidosauria</taxon>
        <taxon>Squamata</taxon>
        <taxon>Bifurcata</taxon>
        <taxon>Unidentata</taxon>
        <taxon>Episquamata</taxon>
        <taxon>Toxicofera</taxon>
        <taxon>Serpentes</taxon>
        <taxon>Colubroidea</taxon>
        <taxon>Viperidae</taxon>
        <taxon>Crotalinae</taxon>
        <taxon>Gloydius</taxon>
    </lineage>
</organism>
<feature type="signal peptide" evidence="2">
    <location>
        <begin position="1"/>
        <end position="18"/>
    </location>
</feature>
<feature type="propeptide" id="PRO_0000308996" evidence="1">
    <location>
        <begin position="19"/>
        <end position="24"/>
    </location>
</feature>
<feature type="chain" id="PRO_0000296369" description="Thrombin-like enzyme gloshedobin">
    <location>
        <begin position="25"/>
        <end position="260"/>
    </location>
</feature>
<feature type="domain" description="Peptidase S1" evidence="3">
    <location>
        <begin position="25"/>
        <end position="252"/>
    </location>
</feature>
<feature type="active site" description="Charge relay system" evidence="1">
    <location>
        <position position="67"/>
    </location>
</feature>
<feature type="active site" description="Charge relay system" evidence="1">
    <location>
        <position position="112"/>
    </location>
</feature>
<feature type="active site" description="Charge relay system" evidence="1">
    <location>
        <position position="206"/>
    </location>
</feature>
<feature type="site" description="Forms a covalent bond with the inhibitor PMSF">
    <location>
        <position position="206"/>
    </location>
</feature>
<feature type="glycosylation site" description="N-linked (GlcNAc...) asparagine" evidence="2">
    <location>
        <position position="123"/>
    </location>
</feature>
<feature type="glycosylation site" description="N-linked (GlcNAc...) asparagine" evidence="2">
    <location>
        <position position="124"/>
    </location>
</feature>
<feature type="disulfide bond" evidence="3">
    <location>
        <begin position="31"/>
        <end position="165"/>
    </location>
</feature>
<feature type="disulfide bond" evidence="3">
    <location>
        <begin position="52"/>
        <end position="68"/>
    </location>
</feature>
<feature type="disulfide bond" evidence="3">
    <location>
        <begin position="100"/>
        <end position="258"/>
    </location>
</feature>
<feature type="disulfide bond" evidence="3">
    <location>
        <begin position="144"/>
        <end position="212"/>
    </location>
</feature>
<feature type="disulfide bond" evidence="3">
    <location>
        <begin position="176"/>
        <end position="191"/>
    </location>
</feature>
<feature type="disulfide bond" evidence="3">
    <location>
        <begin position="202"/>
        <end position="227"/>
    </location>
</feature>
<feature type="sequence conflict" description="In Ref. 1." evidence="7" ref="1">
    <original>T</original>
    <variation>TT</variation>
    <location>
        <position position="151"/>
    </location>
</feature>
<dbReference type="EC" id="3.4.21.-"/>
<dbReference type="EMBL" id="AJ278786">
    <property type="status" value="NOT_ANNOTATED_CDS"/>
    <property type="molecule type" value="mRNA"/>
</dbReference>
<dbReference type="SMR" id="P0C5B4"/>
<dbReference type="MEROPS" id="S01.509"/>
<dbReference type="BRENDA" id="3.4.21.74">
    <property type="organism ID" value="8184"/>
</dbReference>
<dbReference type="GO" id="GO:0005576">
    <property type="term" value="C:extracellular region"/>
    <property type="evidence" value="ECO:0007669"/>
    <property type="project" value="UniProtKB-SubCell"/>
</dbReference>
<dbReference type="GO" id="GO:0030141">
    <property type="term" value="C:secretory granule"/>
    <property type="evidence" value="ECO:0007669"/>
    <property type="project" value="TreeGrafter"/>
</dbReference>
<dbReference type="GO" id="GO:0004252">
    <property type="term" value="F:serine-type endopeptidase activity"/>
    <property type="evidence" value="ECO:0007669"/>
    <property type="project" value="InterPro"/>
</dbReference>
<dbReference type="GO" id="GO:0090729">
    <property type="term" value="F:toxin activity"/>
    <property type="evidence" value="ECO:0007669"/>
    <property type="project" value="UniProtKB-KW"/>
</dbReference>
<dbReference type="GO" id="GO:0006508">
    <property type="term" value="P:proteolysis"/>
    <property type="evidence" value="ECO:0007669"/>
    <property type="project" value="UniProtKB-KW"/>
</dbReference>
<dbReference type="CDD" id="cd00190">
    <property type="entry name" value="Tryp_SPc"/>
    <property type="match status" value="1"/>
</dbReference>
<dbReference type="FunFam" id="2.40.10.10:FF:000158">
    <property type="entry name" value="Thrombin-like enzyme saxthrombin"/>
    <property type="match status" value="1"/>
</dbReference>
<dbReference type="FunFam" id="2.40.10.10:FF:000153">
    <property type="entry name" value="Venom plasminogen activator TSV-PA"/>
    <property type="match status" value="1"/>
</dbReference>
<dbReference type="Gene3D" id="2.40.10.10">
    <property type="entry name" value="Trypsin-like serine proteases"/>
    <property type="match status" value="2"/>
</dbReference>
<dbReference type="InterPro" id="IPR009003">
    <property type="entry name" value="Peptidase_S1_PA"/>
</dbReference>
<dbReference type="InterPro" id="IPR043504">
    <property type="entry name" value="Peptidase_S1_PA_chymotrypsin"/>
</dbReference>
<dbReference type="InterPro" id="IPR001314">
    <property type="entry name" value="Peptidase_S1A"/>
</dbReference>
<dbReference type="InterPro" id="IPR001254">
    <property type="entry name" value="Trypsin_dom"/>
</dbReference>
<dbReference type="InterPro" id="IPR018114">
    <property type="entry name" value="TRYPSIN_HIS"/>
</dbReference>
<dbReference type="InterPro" id="IPR033116">
    <property type="entry name" value="TRYPSIN_SER"/>
</dbReference>
<dbReference type="PANTHER" id="PTHR24271:SF47">
    <property type="entry name" value="KALLIKREIN-1"/>
    <property type="match status" value="1"/>
</dbReference>
<dbReference type="PANTHER" id="PTHR24271">
    <property type="entry name" value="KALLIKREIN-RELATED"/>
    <property type="match status" value="1"/>
</dbReference>
<dbReference type="Pfam" id="PF00089">
    <property type="entry name" value="Trypsin"/>
    <property type="match status" value="1"/>
</dbReference>
<dbReference type="PRINTS" id="PR00722">
    <property type="entry name" value="CHYMOTRYPSIN"/>
</dbReference>
<dbReference type="SMART" id="SM00020">
    <property type="entry name" value="Tryp_SPc"/>
    <property type="match status" value="1"/>
</dbReference>
<dbReference type="SUPFAM" id="SSF50494">
    <property type="entry name" value="Trypsin-like serine proteases"/>
    <property type="match status" value="1"/>
</dbReference>
<dbReference type="PROSITE" id="PS50240">
    <property type="entry name" value="TRYPSIN_DOM"/>
    <property type="match status" value="1"/>
</dbReference>
<dbReference type="PROSITE" id="PS00134">
    <property type="entry name" value="TRYPSIN_HIS"/>
    <property type="match status" value="1"/>
</dbReference>
<dbReference type="PROSITE" id="PS00135">
    <property type="entry name" value="TRYPSIN_SER"/>
    <property type="match status" value="1"/>
</dbReference>
<reference key="1">
    <citation type="journal article" date="2002" name="Biotechnol. Lett.">
        <title>Cloning and expression of defibrase cDNA from the venom of Gloydius shedaoensis.</title>
        <authorList>
            <person name="Yang Q."/>
            <person name="Xu X.-M."/>
            <person name="Li M."/>
            <person name="Yuan X.-D."/>
            <person name="Su Z.-G."/>
            <person name="Janson J.-C."/>
            <person name="An L.-J."/>
        </authorList>
    </citation>
    <scope>NUCLEOTIDE SEQUENCE [MRNA]</scope>
    <source>
        <tissue>Venom gland</tissue>
    </source>
</reference>
<reference key="2">
    <citation type="journal article" date="2009" name="Protein Expr. Purif.">
        <title>Expression, purification and characterization of Gloydius shedaoensis venom gloshedobin as Hsp70 fusion protein in Pichia pastoris.</title>
        <authorList>
            <person name="Yang D."/>
            <person name="Peng M."/>
            <person name="Yang H."/>
            <person name="Yang Q."/>
            <person name="Xu J."/>
        </authorList>
    </citation>
    <scope>FUNCTION</scope>
    <scope>ACTIVITY REGULATION</scope>
    <scope>BIOPHYSICOCHEMICAL PROPERTIES</scope>
</reference>
<reference key="3">
    <citation type="journal article" date="2010" name="Appl. Microbiol. Biotechnol.">
        <title>Soluble expression, purification, and characterization of Gloydius shedaoensis venom gloshedobin in Escherichia coli by using fusion partners.</title>
        <authorList>
            <person name="Jiang X."/>
            <person name="Xu J."/>
            <person name="Yang Q."/>
        </authorList>
    </citation>
    <scope>FUNCTION</scope>
    <scope>ACTIVITY REGULATION</scope>
    <scope>BIOPHYSICOCHEMICAL PROPERTIES</scope>
</reference>
<reference key="4">
    <citation type="journal article" date="2011" name="Int. J. Biol. Macromol.">
        <title>Molecular mechanism analysis of Gloydius shedaoensis venom gloshedobin interaction with inhibitors by homology modeling.</title>
        <authorList>
            <person name="Jiang X."/>
            <person name="Chen L."/>
            <person name="Xu J."/>
            <person name="Yang Q."/>
        </authorList>
    </citation>
    <scope>3D-STRUCTURE MODELING</scope>
    <scope>INTERACTION WITH PMSF</scope>
    <scope>SITE</scope>
    <scope>ACTIVITY REGULATION</scope>
</reference>
<name>VSPGL_GLOSH</name>
<proteinExistence type="evidence at protein level"/>
<accession>P0C5B4</accession>
<sequence>MVLIRVQANLLILQLSYAQKSSELIIGGDECNINEHRFLVALYTSRSRRFYCGGTLINQEWVLTAAHCDRKNIRIKLGMHSEKVPNEDAETRVPKEKFFCLSSKTYTKWDKDIMLMRLKRPVNNSTHIAPVSLPSNPPSVDSVCRVMGWGTITSPQETYPDVPHCANINILDYEVCQAAHGGLPATSRTLCAGILKGGKDSCKGDSGGPLICNGQFQGIASWGAHPCGQSLKPGVYTKVFDYTEWIQSIIAGNTDATCPP</sequence>
<keyword id="KW-1204">Blood coagulation cascade activating toxin</keyword>
<keyword id="KW-1015">Disulfide bond</keyword>
<keyword id="KW-0325">Glycoprotein</keyword>
<keyword id="KW-1199">Hemostasis impairing toxin</keyword>
<keyword id="KW-0378">Hydrolase</keyword>
<keyword id="KW-0645">Protease</keyword>
<keyword id="KW-0964">Secreted</keyword>
<keyword id="KW-0720">Serine protease</keyword>
<keyword id="KW-0732">Signal</keyword>
<keyword id="KW-0800">Toxin</keyword>
<keyword id="KW-0865">Zymogen</keyword>